<protein>
    <recommendedName>
        <fullName evidence="1">UPF0301 protein CTA_0231</fullName>
    </recommendedName>
</protein>
<evidence type="ECO:0000255" key="1">
    <source>
        <dbReference type="HAMAP-Rule" id="MF_00758"/>
    </source>
</evidence>
<dbReference type="EMBL" id="CP000051">
    <property type="protein sequence ID" value="AAX50471.1"/>
    <property type="molecule type" value="Genomic_DNA"/>
</dbReference>
<dbReference type="RefSeq" id="WP_011324642.1">
    <property type="nucleotide sequence ID" value="NC_007429.1"/>
</dbReference>
<dbReference type="SMR" id="Q3KMF1"/>
<dbReference type="KEGG" id="cta:CTA_0231"/>
<dbReference type="HOGENOM" id="CLU_057596_2_1_0"/>
<dbReference type="Proteomes" id="UP000002532">
    <property type="component" value="Chromosome"/>
</dbReference>
<dbReference type="GO" id="GO:0005829">
    <property type="term" value="C:cytosol"/>
    <property type="evidence" value="ECO:0007669"/>
    <property type="project" value="TreeGrafter"/>
</dbReference>
<dbReference type="Gene3D" id="3.40.1740.10">
    <property type="entry name" value="VC0467-like"/>
    <property type="match status" value="1"/>
</dbReference>
<dbReference type="HAMAP" id="MF_00758">
    <property type="entry name" value="UPF0301"/>
    <property type="match status" value="1"/>
</dbReference>
<dbReference type="InterPro" id="IPR003774">
    <property type="entry name" value="AlgH-like"/>
</dbReference>
<dbReference type="NCBIfam" id="NF001271">
    <property type="entry name" value="PRK00228.2-3"/>
    <property type="match status" value="1"/>
</dbReference>
<dbReference type="PANTHER" id="PTHR30327">
    <property type="entry name" value="UNCHARACTERIZED PROTEIN YQGE"/>
    <property type="match status" value="1"/>
</dbReference>
<dbReference type="PANTHER" id="PTHR30327:SF1">
    <property type="entry name" value="UPF0301 PROTEIN YQGE"/>
    <property type="match status" value="1"/>
</dbReference>
<dbReference type="Pfam" id="PF02622">
    <property type="entry name" value="DUF179"/>
    <property type="match status" value="1"/>
</dbReference>
<dbReference type="SUPFAM" id="SSF143456">
    <property type="entry name" value="VC0467-like"/>
    <property type="match status" value="1"/>
</dbReference>
<name>Y231_CHLTA</name>
<gene>
    <name type="ordered locus">CTA_0231</name>
</gene>
<sequence>MTKLPYALLDKGSLLVASPDVNGGIFSRSVVLVCEHSLNGSFGLILNKILEIDLPEEIFPLDHFDESKVRFCMGGPLQANQIMLLHTSPDSANSSIEICPSVFLGGDFSFAGEKEGRTRDDKMLLCFGYSGWQGGQLEKEFLEGLWFLAPSSQEIIFTDAPERMWSDVLQHLGGRFASLSTIPENLLLN</sequence>
<reference key="1">
    <citation type="journal article" date="2005" name="Infect. Immun.">
        <title>Comparative genomic analysis of Chlamydia trachomatis oculotropic and genitotropic strains.</title>
        <authorList>
            <person name="Carlson J.H."/>
            <person name="Porcella S.F."/>
            <person name="McClarty G."/>
            <person name="Caldwell H.D."/>
        </authorList>
    </citation>
    <scope>NUCLEOTIDE SEQUENCE [LARGE SCALE GENOMIC DNA]</scope>
    <source>
        <strain>ATCC VR-571B / DSM 19440 / HAR-13</strain>
    </source>
</reference>
<organism>
    <name type="scientific">Chlamydia trachomatis serovar A (strain ATCC VR-571B / DSM 19440 / HAR-13)</name>
    <dbReference type="NCBI Taxonomy" id="315277"/>
    <lineage>
        <taxon>Bacteria</taxon>
        <taxon>Pseudomonadati</taxon>
        <taxon>Chlamydiota</taxon>
        <taxon>Chlamydiia</taxon>
        <taxon>Chlamydiales</taxon>
        <taxon>Chlamydiaceae</taxon>
        <taxon>Chlamydia/Chlamydophila group</taxon>
        <taxon>Chlamydia</taxon>
    </lineage>
</organism>
<feature type="chain" id="PRO_0000258813" description="UPF0301 protein CTA_0231">
    <location>
        <begin position="1"/>
        <end position="189"/>
    </location>
</feature>
<accession>Q3KMF1</accession>
<proteinExistence type="inferred from homology"/>
<comment type="similarity">
    <text evidence="1">Belongs to the UPF0301 (AlgH) family.</text>
</comment>